<accession>P03138</accession>
<feature type="initiator methionine" description="Removed; by host" evidence="2">
    <location>
        <position position="1"/>
    </location>
</feature>
<feature type="chain" id="PRO_0000038107" description="Large envelope protein" evidence="2">
    <location>
        <begin position="2"/>
        <end position="389"/>
    </location>
</feature>
<feature type="topological domain" description="Intravirion; in internal conformation" evidence="2">
    <location>
        <begin position="2"/>
        <end position="242"/>
    </location>
</feature>
<feature type="topological domain" description="Virion surface; in external conformation" evidence="2">
    <location>
        <begin position="2"/>
        <end position="170"/>
    </location>
</feature>
<feature type="transmembrane region" description="Helical; Name=TM1; Note=In external conformation" evidence="2">
    <location>
        <begin position="171"/>
        <end position="191"/>
    </location>
</feature>
<feature type="topological domain" description="Intravirion; in external conformation" evidence="2">
    <location>
        <begin position="192"/>
        <end position="242"/>
    </location>
</feature>
<feature type="transmembrane region" description="Helical; Name=TM2" evidence="2">
    <location>
        <begin position="243"/>
        <end position="263"/>
    </location>
</feature>
<feature type="topological domain" description="Virion surface" evidence="2">
    <location>
        <begin position="264"/>
        <end position="337"/>
    </location>
</feature>
<feature type="transmembrane region" description="Helical" evidence="2">
    <location>
        <begin position="338"/>
        <end position="358"/>
    </location>
</feature>
<feature type="topological domain" description="Intravirion" evidence="2">
    <location>
        <begin position="359"/>
        <end position="364"/>
    </location>
</feature>
<feature type="transmembrane region" description="Helical; Name=TM3" evidence="2">
    <location>
        <begin position="365"/>
        <end position="387"/>
    </location>
</feature>
<feature type="topological domain" description="Virion surface" evidence="2">
    <location>
        <begin position="388"/>
        <end position="389"/>
    </location>
</feature>
<feature type="region of interest" description="Pre-S" evidence="2">
    <location>
        <begin position="2"/>
        <end position="163"/>
    </location>
</feature>
<feature type="region of interest" description="Pre-S1" evidence="2">
    <location>
        <begin position="2"/>
        <end position="108"/>
    </location>
</feature>
<feature type="region of interest" description="Disordered" evidence="3">
    <location>
        <begin position="76"/>
        <end position="103"/>
    </location>
</feature>
<feature type="region of interest" description="Pre-S2" evidence="2">
    <location>
        <begin position="109"/>
        <end position="163"/>
    </location>
</feature>
<feature type="compositionally biased region" description="Polar residues" evidence="3">
    <location>
        <begin position="85"/>
        <end position="95"/>
    </location>
</feature>
<feature type="lipid moiety-binding region" description="N-myristoyl glycine; by host" evidence="2">
    <location>
        <position position="2"/>
    </location>
</feature>
<feature type="glycosylation site" description="N-linked (GlcNAc...) asparagine; by host" evidence="2">
    <location>
        <position position="309"/>
    </location>
</feature>
<feature type="splice variant" id="VSP_031404" description="In isoform S." evidence="9">
    <location>
        <begin position="1"/>
        <end position="163"/>
    </location>
</feature>
<feature type="splice variant" id="VSP_031405" description="In isoform M." evidence="9">
    <location>
        <begin position="1"/>
        <end position="108"/>
    </location>
</feature>
<feature type="sequence variant" description="In strain: Latvia.">
    <original>Q</original>
    <variation>E</variation>
    <location>
        <position position="75"/>
    </location>
</feature>
<feature type="sequence variant" description="In strain: Latvia.">
    <original>A</original>
    <variation>S</variation>
    <location>
        <position position="147"/>
    </location>
</feature>
<feature type="sequence variant" description="In strain: Latvia.">
    <original>L</original>
    <variation>I</variation>
    <location>
        <position position="150"/>
    </location>
</feature>
<feature type="sequence variant" description="In strain: Latvia.">
    <original>MTT</original>
    <variation>TTP</variation>
    <location>
        <begin position="288"/>
        <end position="290"/>
    </location>
</feature>
<feature type="mutagenesis site" description="Complete loss of myristoylation. Complete loss of infectivity." evidence="8">
    <original>G</original>
    <variation>A</variation>
    <location>
        <position position="2"/>
    </location>
</feature>
<feature type="mutagenesis site" description="Complete loss of infectivity." evidence="7">
    <original>LGFFP</original>
    <variation>KL</variation>
    <location>
        <begin position="11"/>
        <end position="15"/>
    </location>
</feature>
<feature type="mutagenesis site" description="Complete loss of infectivity." evidence="6">
    <original>L</original>
    <variation>R</variation>
    <location>
        <position position="11"/>
    </location>
</feature>
<feature type="mutagenesis site" description="Complete loss of infectivity." evidence="6">
    <original>G</original>
    <variation>E</variation>
    <location>
        <position position="12"/>
    </location>
</feature>
<feature type="mutagenesis site" description="Complete loss of infectivity." evidence="6">
    <original>FF</original>
    <variation>SS</variation>
    <location>
        <begin position="13"/>
        <end position="14"/>
    </location>
</feature>
<feature type="mutagenesis site" description="Complete loss of infectivity.">
    <original>F</original>
    <variation>S</variation>
    <location>
        <position position="13"/>
    </location>
</feature>
<feature type="mutagenesis site" description="Complete loss of infectivity." evidence="7">
    <original>DHQLD</original>
    <variation>KL</variation>
    <location>
        <begin position="16"/>
        <end position="20"/>
    </location>
</feature>
<feature type="mutagenesis site" description="Complete loss of infectivity." evidence="7">
    <original>PAFRA</original>
    <variation>KL</variation>
    <location>
        <begin position="21"/>
        <end position="25"/>
    </location>
</feature>
<feature type="mutagenesis site" description="Complete loss of infectivity." evidence="7">
    <original>NTANP</original>
    <variation>KL</variation>
    <location>
        <begin position="26"/>
        <end position="30"/>
    </location>
</feature>
<feature type="mutagenesis site" description="Complete loss of infectivity." evidence="7">
    <original>DWDFN</original>
    <variation>KL</variation>
    <location>
        <begin position="31"/>
        <end position="35"/>
    </location>
</feature>
<feature type="mutagenesis site" description="Complete loss of infectivity." evidence="7">
    <original>PNKDT</original>
    <variation>KL</variation>
    <location>
        <begin position="36"/>
        <end position="40"/>
    </location>
</feature>
<feature type="mutagenesis site" description="Complete loss of infectivity." evidence="7">
    <original>WPDAN</original>
    <variation>KL</variation>
    <location>
        <begin position="41"/>
        <end position="45"/>
    </location>
</feature>
<feature type="mutagenesis site" description="Complete loss of infectivity.">
    <original>VGAG</original>
    <variation>L</variation>
    <location>
        <begin position="47"/>
        <end position="50"/>
    </location>
</feature>
<feature type="mutagenesis site" description="Complete loss of infectivity." evidence="7">
    <original>AFGLG</original>
    <variation>KL</variation>
    <location>
        <begin position="51"/>
        <end position="55"/>
    </location>
</feature>
<feature type="mutagenesis site" description="Complete loss of infectivity." evidence="7">
    <original>FTPPH</original>
    <variation>KL</variation>
    <location>
        <begin position="56"/>
        <end position="60"/>
    </location>
</feature>
<feature type="mutagenesis site" description="Complete loss of infectivity." evidence="7">
    <original>GGLLG</original>
    <variation>KL</variation>
    <location>
        <begin position="61"/>
        <end position="65"/>
    </location>
</feature>
<feature type="mutagenesis site" description="Complete loss of infectivity." evidence="7">
    <original>WSPQA</original>
    <variation>KL</variation>
    <location>
        <begin position="66"/>
        <end position="70"/>
    </location>
</feature>
<feature type="mutagenesis site" description="Complete loss of infectivity." evidence="7">
    <original>QGILQ</original>
    <variation>KL</variation>
    <location>
        <begin position="71"/>
        <end position="75"/>
    </location>
</feature>
<feature type="mutagenesis site" description="No effect on infectivity." evidence="7">
    <original>TLPAN</original>
    <variation>KL</variation>
    <location>
        <begin position="76"/>
        <end position="80"/>
    </location>
</feature>
<feature type="mutagenesis site" description="No effect on infectivity." evidence="7">
    <original>PPPAS</original>
    <variation>KL</variation>
    <location>
        <begin position="81"/>
        <end position="85"/>
    </location>
</feature>
<feature type="mutagenesis site" description="No effect on infectivity." evidence="7">
    <original>TNRQS</original>
    <variation>KL</variation>
    <location>
        <begin position="86"/>
        <end position="90"/>
    </location>
</feature>
<feature type="mutagenesis site" description="No effect on infectivity." evidence="7">
    <original>GRQPT</original>
    <variation>KL</variation>
    <location>
        <begin position="91"/>
        <end position="95"/>
    </location>
</feature>
<feature type="mutagenesis site" description="No effect on infectivity." evidence="7">
    <original>PLSPP</original>
    <variation>KL</variation>
    <location>
        <begin position="96"/>
        <end position="100"/>
    </location>
</feature>
<feature type="mutagenesis site" description="No effect on infectivity." evidence="7">
    <original>LRNTH</original>
    <variation>KL</variation>
    <location>
        <begin position="101"/>
        <end position="105"/>
    </location>
</feature>
<feature type="mutagenesis site" description="No effect on infectivity." evidence="7">
    <original>PQAMQ</original>
    <variation>KL</variation>
    <location>
        <begin position="106"/>
        <end position="110"/>
    </location>
</feature>
<feature type="modified residue" description="N-acetylmethionine" evidence="4">
    <location sequence="P03138-2">
        <position position="1"/>
    </location>
</feature>
<feature type="glycosylation site" description="O-linked (GalNAc...) threonine" evidence="5">
    <location sequence="P03138-2">
        <position position="37"/>
    </location>
</feature>
<evidence type="ECO:0000250" key="1">
    <source>
        <dbReference type="UniProtKB" id="P03141"/>
    </source>
</evidence>
<evidence type="ECO:0000255" key="2">
    <source>
        <dbReference type="HAMAP-Rule" id="MF_04075"/>
    </source>
</evidence>
<evidence type="ECO:0000256" key="3">
    <source>
        <dbReference type="SAM" id="MobiDB-lite"/>
    </source>
</evidence>
<evidence type="ECO:0000269" key="4">
    <source>
    </source>
</evidence>
<evidence type="ECO:0000269" key="5">
    <source>
    </source>
</evidence>
<evidence type="ECO:0000269" key="6">
    <source>
    </source>
</evidence>
<evidence type="ECO:0000269" key="7">
    <source>
    </source>
</evidence>
<evidence type="ECO:0000269" key="8">
    <source>
    </source>
</evidence>
<evidence type="ECO:0000305" key="9"/>
<protein>
    <recommendedName>
        <fullName evidence="2">Large envelope protein</fullName>
    </recommendedName>
    <alternativeName>
        <fullName evidence="2">L glycoprotein</fullName>
    </alternativeName>
    <alternativeName>
        <fullName evidence="2">L-HBsAg</fullName>
        <shortName evidence="2">LHB</shortName>
    </alternativeName>
    <alternativeName>
        <fullName evidence="2">Large S protein</fullName>
    </alternativeName>
    <alternativeName>
        <fullName evidence="2">Large surface protein</fullName>
    </alternativeName>
    <alternativeName>
        <fullName evidence="2">Major surface antigen</fullName>
    </alternativeName>
</protein>
<organismHost>
    <name type="scientific">Homo sapiens</name>
    <name type="common">Human</name>
    <dbReference type="NCBI Taxonomy" id="9606"/>
</organismHost>
<organismHost>
    <name type="scientific">Pan troglodytes</name>
    <name type="common">Chimpanzee</name>
    <dbReference type="NCBI Taxonomy" id="9598"/>
</organismHost>
<comment type="function">
    <text evidence="2">The large envelope protein exists in two topological conformations, one which is termed 'external' or Le-HBsAg and the other 'internal' or Li-HBsAg. In its external conformation the protein attaches the virus to cell receptors and thereby initiating infection. This interaction determines the species specificity and liver tropism. This attachment induces virion internalization predominantly through caveolin-mediated endocytosis. The large envelope protein also assures fusion between virion membrane and endosomal membrane. In its internal conformation the protein plays a role in virion morphogenesis and mediates the contact with the nucleocapsid like a matrix protein.</text>
</comment>
<comment type="function">
    <text evidence="2">The middle envelope protein plays an important role in the budding of the virion. It is involved in the induction of budding in a nucleocapsid independent way. In this process the majority of envelope proteins bud to form subviral lipoprotein particles of 22 nm of diameter that do not contain a nucleocapsid.</text>
</comment>
<comment type="subunit">
    <molecule>Isoform L</molecule>
    <text evidence="1">In its internal form (Li-HBsAg), interacts with the capsid protein and with the isoform S. Interacts with host chaperone CANX.</text>
</comment>
<comment type="subunit">
    <molecule>Isoform M</molecule>
    <text evidence="1">Associates with host chaperone CANX through its pre-S2 N glycan; this association may be essential for isoform M proper secretion.</text>
</comment>
<comment type="subunit">
    <molecule>Isoform S</molecule>
    <text evidence="1">Interacts with isoform L. Interacts with the antigens of satellite virus HDV (HDVAgs); this interaction is required for encapsidation of HDV genomic RNA.</text>
</comment>
<comment type="subcellular location">
    <subcellularLocation>
        <location evidence="2">Virion membrane</location>
    </subcellularLocation>
</comment>
<comment type="alternative products">
    <event type="alternative splicing"/>
    <event type="alternative initiation"/>
    <isoform>
        <id>P03138-1</id>
        <name>L</name>
        <name>Large envelope protein</name>
        <name>LHB</name>
        <name>L-HBsAg</name>
        <sequence type="displayed"/>
    </isoform>
    <isoform>
        <id>P03138-2</id>
        <name>M</name>
        <name>Middle envelope protein</name>
        <name>MHB</name>
        <name>M-HBsAg</name>
        <sequence type="described" ref="VSP_031405"/>
    </isoform>
    <isoform>
        <id>P03138-3</id>
        <name>S</name>
        <name>Small envelope protein</name>
        <name>SHB</name>
        <name>S-HBsAg</name>
        <sequence type="described" ref="VSP_031404"/>
    </isoform>
</comment>
<comment type="domain">
    <text evidence="2">The large envelope protein is synthesized with the pre-S region at the cytosolic side of the endoplasmic reticulum and, hence will be within the virion after budding. Therefore the pre-S region is not N-glycosylated. Later a post-translational translocation of N-terminal pre-S and TM1 domains occur in about 50% of proteins at the virion surface. These molecules change their topology by an unknown mechanism, resulting in exposure of pre-S region at virion surface. For isoform M in contrast, the pre-S2 region is translocated cotranslationally to the endoplasmic reticulum lumen and is N-glycosylated.</text>
</comment>
<comment type="PTM">
    <text evidence="2 4 5">Isoform M is N-terminally acetylated by host at a ratio of 90%, and N-glycosylated by host at the pre-S2 region.</text>
</comment>
<comment type="PTM">
    <text evidence="2">Myristoylated.</text>
</comment>
<comment type="biotechnology">
    <text>Systematic vaccination of individuals at risk of exposure to the virus has been the main method of controlling the morbidity and mortality associated with hepatitis B. The first hepatitis B vaccine was manufactured by the purification and inactivation of HBsAg obtained from the plasma of chronic hepatitis B virus carriers. The vaccine is now produced by recombinant DNA techniques and expression of the S isoform in yeast cells. The pre-S region do not seem to induce strong enough antigenic response.</text>
</comment>
<comment type="similarity">
    <text evidence="2">Belongs to the orthohepadnavirus major surface antigen family.</text>
</comment>
<comment type="sequence caution" evidence="9">
    <conflict type="erroneous initiation">
        <sequence resource="EMBL-CDS" id="AAA45496"/>
    </conflict>
</comment>
<comment type="sequence caution" evidence="9">
    <conflict type="erroneous initiation">
        <sequence resource="EMBL-CDS" id="CAA26324"/>
    </conflict>
</comment>
<sequence length="389" mass="42766">MGQNLSTSNPLGFFPDHQLDPAFRANTANPDWDFNPNKDTWPDANKVGAGAFGLGFTPPHGGLLGWSPQAQGILQTLPANPPPASTNRQSGRQPTPLSPPLRNTHPQAMQWNSTTFHQTLQDPRVRGLYFPAGGSSSGTVNPVLTTASPLSSIFSRIGDPALNMENITSGFLGPLLVLQAGFFLLTRILTIPQSLDSWWTSLNFLGGTTVCLGQNSQSPTSNHSPTSCPPTCPGYRWMCLRRFIIFLFILLLCLIFLLVLLDYQGMLPVCPLIPGSSTTSTGPCRTCMTTAQGTSMYPSCCCTKPSDGNCTCIPIPSSWAFGKFLWEWASARFSWLSLLVPFVQWFVGLSPTVWLSVIWMMWYWGPSLYSILSPFLPLLPIFFCLWVYI</sequence>
<name>HBSAG_HBVD3</name>
<reference key="1">
    <citation type="journal article" date="1979" name="Nature">
        <title>Nucleotide sequence of the hepatitis B virus genome (subtype ayw) cloned in E. coli.</title>
        <authorList>
            <person name="Galibert F."/>
            <person name="Mandart E."/>
            <person name="Fitoussi F."/>
            <person name="Tiollais P."/>
            <person name="Charnay P."/>
        </authorList>
    </citation>
    <scope>NUCLEOTIDE SEQUENCE [GENOMIC DNA]</scope>
</reference>
<reference key="2">
    <citation type="journal article" date="1985" name="FEBS Lett.">
        <title>Subtype ayw variant of hepatitis B virus. DNA primary structure analysis.</title>
        <authorList>
            <person name="Bichko V."/>
            <person name="Pushko P."/>
            <person name="Dreilina D."/>
            <person name="Pumpen P."/>
            <person name="Gren E.Y."/>
        </authorList>
    </citation>
    <scope>NUCLEOTIDE SEQUENCE [GENOMIC DNA]</scope>
    <source>
        <strain>Latvia</strain>
    </source>
</reference>
<reference key="3">
    <citation type="journal article" date="1984" name="Dokl. Akad. Nauk SSSR">
        <title>Synthesis of the full amino acid sequence of the surface antigen of the hepatitis B virus in Escherichia coli.</title>
        <authorList>
            <person name="Kozlovskaia T.M."/>
            <person name="Pumpen P.P."/>
            <person name="Borisova G.P."/>
            <person name="Dishler A.V."/>
            <person name="Bychko V.V."/>
        </authorList>
    </citation>
    <scope>NUCLEOTIDE SEQUENCE [GENOMIC DNA]</scope>
    <source>
        <strain>Latvia</strain>
    </source>
</reference>
<reference key="4">
    <citation type="journal article" date="1987" name="J. Virol.">
        <title>The preS1 protein of hepatitis B virus is acylated at its amino terminus with myristic acid.</title>
        <authorList>
            <person name="Persing D.H."/>
            <person name="Varmus H.E."/>
            <person name="Ganem D."/>
        </authorList>
    </citation>
    <scope>MYRISTOYLATION AT GLY-2</scope>
</reference>
<reference key="5">
    <citation type="journal article" date="1995" name="EMBO J.">
        <title>Novel transmembrane topology of the hepatitis B virus envelope proteins.</title>
        <authorList>
            <person name="Prange R."/>
            <person name="Streeck R.E."/>
        </authorList>
    </citation>
    <scope>TRANSMEMBRANE TOPOLOGY</scope>
</reference>
<reference key="6">
    <citation type="journal article" date="1995" name="Virology">
        <title>Myristylation of the hepatitis B virus large surface protein is essential for viral infectivity.</title>
        <authorList>
            <person name="Gripon P."/>
            <person name="Le Seyec J."/>
            <person name="Rumin S."/>
            <person name="Guguen-Guillouzo C."/>
        </authorList>
    </citation>
    <scope>MUTAGENESIS OF GLY-2</scope>
</reference>
<reference key="7">
    <citation type="journal article" date="1998" name="J. Virol.">
        <title>Role for calnexin and N-linked glycosylation in the assembly and secretion of hepatitis B virus middle envelope protein particles.</title>
        <authorList>
            <person name="Werr M."/>
            <person name="Prange R."/>
        </authorList>
    </citation>
    <scope>FUNCTION</scope>
</reference>
<reference key="8">
    <citation type="journal article" date="1999" name="J. Biol. Chem.">
        <title>Analysis of the pre-S2 N- and O-linked glycans of the M surface protein from human hepatitis B virus.</title>
        <authorList>
            <person name="Schmitt S."/>
            <person name="Glebe D."/>
            <person name="Alving K."/>
            <person name="Tolle T.K."/>
            <person name="Linder M."/>
            <person name="Geyer H."/>
            <person name="Linder D."/>
            <person name="Peter-Katalinic J."/>
            <person name="Gerlich W.H."/>
            <person name="Geyer R."/>
        </authorList>
    </citation>
    <scope>GLYCOSYLATION (ISOFORM M)</scope>
    <scope>ACETYLATION AT MET-1 (ISOFORM M)</scope>
    <source>
        <strain>Isolate clinical</strain>
    </source>
</reference>
<reference key="9">
    <citation type="journal article" date="2004" name="J. Gen. Virol.">
        <title>Structure of pre-S2 N- and O-linked glycans in surface proteins from different genotypes of hepatitis B virus.</title>
        <authorList>
            <person name="Schmitt S."/>
            <person name="Glebe D."/>
            <person name="Tolle T.K."/>
            <person name="Lochnit G."/>
            <person name="Linder D."/>
            <person name="Geyer R."/>
            <person name="Gerlich W.H."/>
        </authorList>
    </citation>
    <scope>GLYCOSYLATION AT THR-37 (ISOFORM M)</scope>
</reference>
<reference key="10">
    <citation type="journal article" date="2006" name="J. Virol.">
        <title>Analysis of the cytosolic domains of the hepatitis B virus envelope proteins for their function in viral particle assembly and infectivity.</title>
        <authorList>
            <person name="Blanchet M."/>
            <person name="Sureau C."/>
        </authorList>
    </citation>
    <scope>FUNCTION</scope>
</reference>
<reference key="11">
    <citation type="journal article" date="2006" name="Hepatology">
        <title>Characterization of a hepatitis B and hepatitis delta virus receptor binding site.</title>
        <authorList>
            <person name="Engelke M."/>
            <person name="Mills K."/>
            <person name="Seitz S."/>
            <person name="Simon P."/>
            <person name="Gripon P."/>
            <person name="Schnolzer M."/>
            <person name="Urban S."/>
        </authorList>
    </citation>
    <scope>MUTAGENESIS OF LEU-11; GLY-12 AND 13-PHE-PHE-14</scope>
</reference>
<reference key="12">
    <citation type="journal article" date="2007" name="J. Virol.">
        <title>Infectivity determinants of the hepatitis B virus pre-S domain are confined to the N-terminal 75 amino acid residues.</title>
        <authorList>
            <person name="Blanchet M."/>
            <person name="Sureau C."/>
        </authorList>
    </citation>
    <scope>MUTAGENESIS OF 11-LEU--PRO-15; 16-ASP--ASP-20; 21-PRO--ALA-25; 26-ASN--PRO-30; 31-ASP--ASN-35; 36-PRO--THR-40; 41-TRP--ASN-45; 46-LYS--GLY-50; 51-ALA--GLY-55; 56-PHE--HIS-60; 61-GLY--GLY-65; 66-TRP--ALA-70; 71-GLN--GLN-75; 76-THR--ASN-80; 81-PRO--SER-85; 86-THR--SER-90; 91-GLY--THR-95; 96-PRO--PRO-100; 101-LEU--HIS-105 AND 106-PRO--GLN-110</scope>
</reference>
<reference key="13">
    <citation type="journal article" date="1996" name="Intervirology">
        <title>Functions of the large hepatitis B virus surface protein in viral particle morphogenesis.</title>
        <authorList>
            <person name="Bruss V."/>
            <person name="Gerhardt E."/>
            <person name="Vieluf K."/>
            <person name="Wunderlich G."/>
        </authorList>
    </citation>
    <scope>REVIEW</scope>
</reference>
<reference key="14">
    <citation type="journal article" date="1998" name="Adv. Exp. Med. Biol.">
        <title>Role of glycan processing in hepatitis B virus envelope protein trafficking.</title>
        <authorList>
            <person name="Block T.M."/>
            <person name="Lu X."/>
            <person name="Mehta A."/>
            <person name="Park J."/>
            <person name="Blumberg B.S."/>
            <person name="Dwek R."/>
        </authorList>
    </citation>
    <scope>REVIEW</scope>
</reference>
<reference key="15">
    <citation type="journal article" date="2004" name="Virus Res.">
        <title>Envelopment of the hepatitis B virus nucleocapsid.</title>
        <authorList>
            <person name="Bruss V."/>
        </authorList>
    </citation>
    <scope>REVIEW</scope>
</reference>
<reference key="16">
    <citation type="journal article" date="2006" name="Cancer Sci.">
        <title>Hepatitis B virus pre-S mutants, endoplasmic reticulum stress and hepatocarcinogenesis.</title>
        <authorList>
            <person name="Wang H.C."/>
            <person name="Huang W."/>
            <person name="Lai M.D."/>
            <person name="Su I.J."/>
        </authorList>
    </citation>
    <scope>REVIEW</scope>
</reference>
<gene>
    <name evidence="2" type="primary">S</name>
</gene>
<keyword id="KW-0007">Acetylation</keyword>
<keyword id="KW-0024">Alternative initiation</keyword>
<keyword id="KW-0025">Alternative splicing</keyword>
<keyword id="KW-1166">Caveolin-mediated endocytosis of virus by host</keyword>
<keyword id="KW-1170">Fusion of virus membrane with host endosomal membrane</keyword>
<keyword id="KW-1168">Fusion of virus membrane with host membrane</keyword>
<keyword id="KW-0325">Glycoprotein</keyword>
<keyword id="KW-0945">Host-virus interaction</keyword>
<keyword id="KW-0449">Lipoprotein</keyword>
<keyword id="KW-0472">Membrane</keyword>
<keyword id="KW-0519">Myristate</keyword>
<keyword id="KW-1185">Reference proteome</keyword>
<keyword id="KW-0812">Transmembrane</keyword>
<keyword id="KW-1133">Transmembrane helix</keyword>
<keyword id="KW-1161">Viral attachment to host cell</keyword>
<keyword id="KW-0261">Viral envelope protein</keyword>
<keyword id="KW-1162">Viral penetration into host cytoplasm</keyword>
<keyword id="KW-0946">Virion</keyword>
<keyword id="KW-1164">Virus endocytosis by host</keyword>
<keyword id="KW-1160">Virus entry into host cell</keyword>
<dbReference type="EMBL" id="V01460">
    <property type="status" value="NOT_ANNOTATED_CDS"/>
    <property type="molecule type" value="Genomic_DNA"/>
</dbReference>
<dbReference type="EMBL" id="X02496">
    <property type="protein sequence ID" value="CAA26324.1"/>
    <property type="status" value="ALT_INIT"/>
    <property type="molecule type" value="Genomic_DNA"/>
</dbReference>
<dbReference type="EMBL" id="M12393">
    <property type="protein sequence ID" value="AAA45496.1"/>
    <property type="status" value="ALT_INIT"/>
    <property type="molecule type" value="Genomic_DNA"/>
</dbReference>
<dbReference type="PIR" id="A03703">
    <property type="entry name" value="SAVLAH"/>
</dbReference>
<dbReference type="SMR" id="P03138"/>
<dbReference type="ELM" id="P03138"/>
<dbReference type="BindingDB" id="P03138"/>
<dbReference type="GlyCosmos" id="P03138">
    <property type="glycosylation" value="2 sites, No reported glycans"/>
</dbReference>
<dbReference type="iPTMnet" id="P03138"/>
<dbReference type="ABCD" id="P03138">
    <property type="antibodies" value="4 sequenced antibodies"/>
</dbReference>
<dbReference type="Proteomes" id="UP000007930">
    <property type="component" value="Segment"/>
</dbReference>
<dbReference type="GO" id="GO:0016020">
    <property type="term" value="C:membrane"/>
    <property type="evidence" value="ECO:0007669"/>
    <property type="project" value="UniProtKB-UniRule"/>
</dbReference>
<dbReference type="GO" id="GO:0019031">
    <property type="term" value="C:viral envelope"/>
    <property type="evidence" value="ECO:0007669"/>
    <property type="project" value="UniProtKB-KW"/>
</dbReference>
<dbReference type="GO" id="GO:0055036">
    <property type="term" value="C:virion membrane"/>
    <property type="evidence" value="ECO:0007669"/>
    <property type="project" value="UniProtKB-SubCell"/>
</dbReference>
<dbReference type="GO" id="GO:0075513">
    <property type="term" value="P:caveolin-mediated endocytosis of virus by host cell"/>
    <property type="evidence" value="ECO:0007669"/>
    <property type="project" value="UniProtKB-KW"/>
</dbReference>
<dbReference type="GO" id="GO:0039654">
    <property type="term" value="P:fusion of virus membrane with host endosome membrane"/>
    <property type="evidence" value="ECO:0007669"/>
    <property type="project" value="UniProtKB-KW"/>
</dbReference>
<dbReference type="GO" id="GO:0019062">
    <property type="term" value="P:virion attachment to host cell"/>
    <property type="evidence" value="ECO:0007669"/>
    <property type="project" value="UniProtKB-UniRule"/>
</dbReference>
<dbReference type="HAMAP" id="MF_04075">
    <property type="entry name" value="HBV_HBSAG"/>
    <property type="match status" value="1"/>
</dbReference>
<dbReference type="InterPro" id="IPR000349">
    <property type="entry name" value="HBV_HBSAG"/>
</dbReference>
<dbReference type="Pfam" id="PF00695">
    <property type="entry name" value="vMSA"/>
    <property type="match status" value="1"/>
</dbReference>
<proteinExistence type="evidence at protein level"/>
<organism>
    <name type="scientific">Hepatitis B virus genotype D subtype ayw (isolate France/Tiollais/1979)</name>
    <name type="common">HBV-D</name>
    <dbReference type="NCBI Taxonomy" id="490133"/>
    <lineage>
        <taxon>Viruses</taxon>
        <taxon>Riboviria</taxon>
        <taxon>Pararnavirae</taxon>
        <taxon>Artverviricota</taxon>
        <taxon>Revtraviricetes</taxon>
        <taxon>Blubervirales</taxon>
        <taxon>Hepadnaviridae</taxon>
        <taxon>Orthohepadnavirus</taxon>
        <taxon>Hepatitis B virus</taxon>
        <taxon>hepatitis B virus genotype D</taxon>
    </lineage>
</organism>